<evidence type="ECO:0000255" key="1">
    <source>
        <dbReference type="HAMAP-Rule" id="MF_01215"/>
    </source>
</evidence>
<reference key="1">
    <citation type="submission" date="2008-03" db="EMBL/GenBank/DDBJ databases">
        <title>Complete sequence of Leptothrix cholodnii SP-6.</title>
        <authorList>
            <consortium name="US DOE Joint Genome Institute"/>
            <person name="Copeland A."/>
            <person name="Lucas S."/>
            <person name="Lapidus A."/>
            <person name="Glavina del Rio T."/>
            <person name="Dalin E."/>
            <person name="Tice H."/>
            <person name="Bruce D."/>
            <person name="Goodwin L."/>
            <person name="Pitluck S."/>
            <person name="Chertkov O."/>
            <person name="Brettin T."/>
            <person name="Detter J.C."/>
            <person name="Han C."/>
            <person name="Kuske C.R."/>
            <person name="Schmutz J."/>
            <person name="Larimer F."/>
            <person name="Land M."/>
            <person name="Hauser L."/>
            <person name="Kyrpides N."/>
            <person name="Lykidis A."/>
            <person name="Emerson D."/>
            <person name="Richardson P."/>
        </authorList>
    </citation>
    <scope>NUCLEOTIDE SEQUENCE [LARGE SCALE GENOMIC DNA]</scope>
    <source>
        <strain>ATCC 51168 / LMG 8142 / SP-6</strain>
    </source>
</reference>
<name>PYRF_LEPCP</name>
<protein>
    <recommendedName>
        <fullName evidence="1">Orotidine 5'-phosphate decarboxylase</fullName>
        <ecNumber evidence="1">4.1.1.23</ecNumber>
    </recommendedName>
    <alternativeName>
        <fullName evidence="1">OMP decarboxylase</fullName>
        <shortName evidence="1">OMPDCase</shortName>
        <shortName evidence="1">OMPdecase</shortName>
    </alternativeName>
</protein>
<organism>
    <name type="scientific">Leptothrix cholodnii (strain ATCC 51168 / LMG 8142 / SP-6)</name>
    <name type="common">Leptothrix discophora (strain SP-6)</name>
    <dbReference type="NCBI Taxonomy" id="395495"/>
    <lineage>
        <taxon>Bacteria</taxon>
        <taxon>Pseudomonadati</taxon>
        <taxon>Pseudomonadota</taxon>
        <taxon>Betaproteobacteria</taxon>
        <taxon>Burkholderiales</taxon>
        <taxon>Sphaerotilaceae</taxon>
        <taxon>Leptothrix</taxon>
    </lineage>
</organism>
<keyword id="KW-0210">Decarboxylase</keyword>
<keyword id="KW-0456">Lyase</keyword>
<keyword id="KW-0665">Pyrimidine biosynthesis</keyword>
<keyword id="KW-1185">Reference proteome</keyword>
<dbReference type="EC" id="4.1.1.23" evidence="1"/>
<dbReference type="EMBL" id="CP001013">
    <property type="protein sequence ID" value="ACB36360.1"/>
    <property type="molecule type" value="Genomic_DNA"/>
</dbReference>
<dbReference type="RefSeq" id="WP_012349103.1">
    <property type="nucleotide sequence ID" value="NC_010524.1"/>
</dbReference>
<dbReference type="SMR" id="B1XXP1"/>
<dbReference type="STRING" id="395495.Lcho_4108"/>
<dbReference type="KEGG" id="lch:Lcho_4108"/>
<dbReference type="eggNOG" id="COG0284">
    <property type="taxonomic scope" value="Bacteria"/>
</dbReference>
<dbReference type="HOGENOM" id="CLU_060704_1_0_4"/>
<dbReference type="OrthoDB" id="9808470at2"/>
<dbReference type="UniPathway" id="UPA00070">
    <property type="reaction ID" value="UER00120"/>
</dbReference>
<dbReference type="Proteomes" id="UP000001693">
    <property type="component" value="Chromosome"/>
</dbReference>
<dbReference type="GO" id="GO:0004590">
    <property type="term" value="F:orotidine-5'-phosphate decarboxylase activity"/>
    <property type="evidence" value="ECO:0007669"/>
    <property type="project" value="UniProtKB-UniRule"/>
</dbReference>
<dbReference type="GO" id="GO:0006207">
    <property type="term" value="P:'de novo' pyrimidine nucleobase biosynthetic process"/>
    <property type="evidence" value="ECO:0007669"/>
    <property type="project" value="InterPro"/>
</dbReference>
<dbReference type="GO" id="GO:0044205">
    <property type="term" value="P:'de novo' UMP biosynthetic process"/>
    <property type="evidence" value="ECO:0007669"/>
    <property type="project" value="UniProtKB-UniRule"/>
</dbReference>
<dbReference type="CDD" id="cd04725">
    <property type="entry name" value="OMP_decarboxylase_like"/>
    <property type="match status" value="1"/>
</dbReference>
<dbReference type="Gene3D" id="3.20.20.70">
    <property type="entry name" value="Aldolase class I"/>
    <property type="match status" value="1"/>
</dbReference>
<dbReference type="HAMAP" id="MF_01215">
    <property type="entry name" value="OMPdecase_type2"/>
    <property type="match status" value="1"/>
</dbReference>
<dbReference type="InterPro" id="IPR013785">
    <property type="entry name" value="Aldolase_TIM"/>
</dbReference>
<dbReference type="InterPro" id="IPR018089">
    <property type="entry name" value="OMPdecase_AS"/>
</dbReference>
<dbReference type="InterPro" id="IPR011995">
    <property type="entry name" value="OMPdecase_type-2"/>
</dbReference>
<dbReference type="InterPro" id="IPR001754">
    <property type="entry name" value="OMPdeCOase_dom"/>
</dbReference>
<dbReference type="InterPro" id="IPR011060">
    <property type="entry name" value="RibuloseP-bd_barrel"/>
</dbReference>
<dbReference type="NCBIfam" id="TIGR02127">
    <property type="entry name" value="pyrF_sub2"/>
    <property type="match status" value="1"/>
</dbReference>
<dbReference type="PANTHER" id="PTHR43375">
    <property type="entry name" value="OROTIDINE 5'-PHOSPHATE DECARBOXYLASE"/>
    <property type="match status" value="1"/>
</dbReference>
<dbReference type="PANTHER" id="PTHR43375:SF1">
    <property type="entry name" value="OROTIDINE 5'-PHOSPHATE DECARBOXYLASE"/>
    <property type="match status" value="1"/>
</dbReference>
<dbReference type="Pfam" id="PF00215">
    <property type="entry name" value="OMPdecase"/>
    <property type="match status" value="1"/>
</dbReference>
<dbReference type="SMART" id="SM00934">
    <property type="entry name" value="OMPdecase"/>
    <property type="match status" value="1"/>
</dbReference>
<dbReference type="SUPFAM" id="SSF51366">
    <property type="entry name" value="Ribulose-phoshate binding barrel"/>
    <property type="match status" value="1"/>
</dbReference>
<dbReference type="PROSITE" id="PS00156">
    <property type="entry name" value="OMPDECASE"/>
    <property type="match status" value="1"/>
</dbReference>
<feature type="chain" id="PRO_1000138956" description="Orotidine 5'-phosphate decarboxylase">
    <location>
        <begin position="1"/>
        <end position="284"/>
    </location>
</feature>
<feature type="active site" description="Proton donor" evidence="1">
    <location>
        <position position="95"/>
    </location>
</feature>
<gene>
    <name evidence="1" type="primary">pyrF</name>
    <name type="ordered locus">Lcho_4108</name>
</gene>
<sequence length="284" mass="30581">MNFIDQLARAERLHDSLLCVGLDPEPGKFPGAWKGDAGKIFDFCAAIVDATKDLVIAFKPQIAYFAAHRAEDQLERLMAYIKRTAPDVPVILDAKRGDIGSTAEQYAREAFERYQADAVTLSPFMGFDSIEPYLRYADKGVILLCRTSNPGGNDWQMQRLADVPGQPRLFEHLAHRAQTEWNRNGQLALVVGATYPAEIARVRELAPTLPLLIPGVGAQGGDAQATVQAGLVCDASGASTGPIIVNSSRAVLYASAGDDFAQAARRVALATRDALNAASAAARR</sequence>
<comment type="catalytic activity">
    <reaction evidence="1">
        <text>orotidine 5'-phosphate + H(+) = UMP + CO2</text>
        <dbReference type="Rhea" id="RHEA:11596"/>
        <dbReference type="ChEBI" id="CHEBI:15378"/>
        <dbReference type="ChEBI" id="CHEBI:16526"/>
        <dbReference type="ChEBI" id="CHEBI:57538"/>
        <dbReference type="ChEBI" id="CHEBI:57865"/>
        <dbReference type="EC" id="4.1.1.23"/>
    </reaction>
</comment>
<comment type="pathway">
    <text evidence="1">Pyrimidine metabolism; UMP biosynthesis via de novo pathway; UMP from orotate: step 2/2.</text>
</comment>
<comment type="similarity">
    <text evidence="1">Belongs to the OMP decarboxylase family. Type 2 subfamily.</text>
</comment>
<proteinExistence type="inferred from homology"/>
<accession>B1XXP1</accession>